<comment type="function">
    <text>Transcriptional repressor. MXI1 binds with MAX to form a sequence-specific DNA-binding protein complex which recognizes the core sequence 5'-CAC[GA]TG-3'. MXI1 thus antagonizes MYC transcriptional activity by competing for MAX.</text>
</comment>
<comment type="subunit">
    <text evidence="1">Efficient DNA binding requires dimerization with another bHLH protein. Binds DNA as a heterodimer with MAX. Interacts with SMC3. Interacts with RNF17 (By similarity).</text>
</comment>
<comment type="subcellular location">
    <subcellularLocation>
        <location>Nucleus</location>
    </subcellularLocation>
</comment>
<proteinExistence type="evidence at transcript level"/>
<protein>
    <recommendedName>
        <fullName>Max-interacting protein 1</fullName>
        <shortName>Max interactor 1</shortName>
    </recommendedName>
</protein>
<gene>
    <name type="primary">Mxi1</name>
</gene>
<evidence type="ECO:0000250" key="1"/>
<evidence type="ECO:0000255" key="2">
    <source>
        <dbReference type="PROSITE-ProRule" id="PRU00981"/>
    </source>
</evidence>
<evidence type="ECO:0000256" key="3">
    <source>
        <dbReference type="SAM" id="MobiDB-lite"/>
    </source>
</evidence>
<accession>O09015</accession>
<sequence length="228" mass="26022">MERVKMINVQPMLEAAEFLERRERECEHGYASSFPSMPSPRLQHSKPPRRLSRAQKHSSGSSNTSTANRSTHNELEKNRRAHLRLCLERLKVLIPLGPDCTRHTTLGLLNKAKAHIKKLEEAERKSQHQLENLEREQRFLKRRLEQLQGPQEMERIRMDSIGSTISSDRSDSEREEIEVDVESTEFSHGEVDNISTTSISDIDDHSSLQSIGSDEGYSSASVKLSFTS</sequence>
<reference key="1">
    <citation type="submission" date="1997-05" db="EMBL/GenBank/DDBJ databases">
        <authorList>
            <person name="Wang D.Y."/>
            <person name="Xiang Y.Y."/>
            <person name="Tanaka M."/>
            <person name="Sugimura H."/>
        </authorList>
    </citation>
    <scope>NUCLEOTIDE SEQUENCE [MRNA]</scope>
    <source>
        <strain>Wistar</strain>
    </source>
</reference>
<organism>
    <name type="scientific">Rattus norvegicus</name>
    <name type="common">Rat</name>
    <dbReference type="NCBI Taxonomy" id="10116"/>
    <lineage>
        <taxon>Eukaryota</taxon>
        <taxon>Metazoa</taxon>
        <taxon>Chordata</taxon>
        <taxon>Craniata</taxon>
        <taxon>Vertebrata</taxon>
        <taxon>Euteleostomi</taxon>
        <taxon>Mammalia</taxon>
        <taxon>Eutheria</taxon>
        <taxon>Euarchontoglires</taxon>
        <taxon>Glires</taxon>
        <taxon>Rodentia</taxon>
        <taxon>Myomorpha</taxon>
        <taxon>Muroidea</taxon>
        <taxon>Muridae</taxon>
        <taxon>Murinae</taxon>
        <taxon>Rattus</taxon>
    </lineage>
</organism>
<dbReference type="EMBL" id="AF003008">
    <property type="protein sequence ID" value="AAB61595.1"/>
    <property type="molecule type" value="mRNA"/>
</dbReference>
<dbReference type="SMR" id="O09015"/>
<dbReference type="FunCoup" id="O09015">
    <property type="interactions" value="347"/>
</dbReference>
<dbReference type="STRING" id="10116.ENSRNOP00000040770"/>
<dbReference type="PhosphoSitePlus" id="O09015"/>
<dbReference type="PaxDb" id="10116-ENSRNOP00000040770"/>
<dbReference type="UCSC" id="RGD:3128">
    <property type="organism name" value="rat"/>
</dbReference>
<dbReference type="AGR" id="RGD:3128"/>
<dbReference type="RGD" id="3128">
    <property type="gene designation" value="Mxi1"/>
</dbReference>
<dbReference type="eggNOG" id="KOG2483">
    <property type="taxonomic scope" value="Eukaryota"/>
</dbReference>
<dbReference type="InParanoid" id="O09015"/>
<dbReference type="PhylomeDB" id="O09015"/>
<dbReference type="PRO" id="PR:O09015"/>
<dbReference type="Proteomes" id="UP000002494">
    <property type="component" value="Unplaced"/>
</dbReference>
<dbReference type="GO" id="GO:0005634">
    <property type="term" value="C:nucleus"/>
    <property type="evidence" value="ECO:0000266"/>
    <property type="project" value="RGD"/>
</dbReference>
<dbReference type="GO" id="GO:0090575">
    <property type="term" value="C:RNA polymerase II transcription regulator complex"/>
    <property type="evidence" value="ECO:0000266"/>
    <property type="project" value="RGD"/>
</dbReference>
<dbReference type="GO" id="GO:0000981">
    <property type="term" value="F:DNA-binding transcription factor activity, RNA polymerase II-specific"/>
    <property type="evidence" value="ECO:0000318"/>
    <property type="project" value="GO_Central"/>
</dbReference>
<dbReference type="GO" id="GO:0046983">
    <property type="term" value="F:protein dimerization activity"/>
    <property type="evidence" value="ECO:0007669"/>
    <property type="project" value="InterPro"/>
</dbReference>
<dbReference type="GO" id="GO:0000978">
    <property type="term" value="F:RNA polymerase II cis-regulatory region sequence-specific DNA binding"/>
    <property type="evidence" value="ECO:0000318"/>
    <property type="project" value="GO_Central"/>
</dbReference>
<dbReference type="GO" id="GO:0001825">
    <property type="term" value="P:blastocyst formation"/>
    <property type="evidence" value="ECO:0000266"/>
    <property type="project" value="RGD"/>
</dbReference>
<dbReference type="GO" id="GO:0000122">
    <property type="term" value="P:negative regulation of transcription by RNA polymerase II"/>
    <property type="evidence" value="ECO:0000266"/>
    <property type="project" value="RGD"/>
</dbReference>
<dbReference type="GO" id="GO:0006355">
    <property type="term" value="P:regulation of DNA-templated transcription"/>
    <property type="evidence" value="ECO:0000314"/>
    <property type="project" value="RGD"/>
</dbReference>
<dbReference type="GO" id="GO:0006357">
    <property type="term" value="P:regulation of transcription by RNA polymerase II"/>
    <property type="evidence" value="ECO:0000318"/>
    <property type="project" value="GO_Central"/>
</dbReference>
<dbReference type="CDD" id="cd18930">
    <property type="entry name" value="bHLHzip_MXI1"/>
    <property type="match status" value="1"/>
</dbReference>
<dbReference type="FunFam" id="4.10.280.10:FF:000014">
    <property type="entry name" value="Max dimerization protein 1"/>
    <property type="match status" value="1"/>
</dbReference>
<dbReference type="Gene3D" id="4.10.280.10">
    <property type="entry name" value="Helix-loop-helix DNA-binding domain"/>
    <property type="match status" value="1"/>
</dbReference>
<dbReference type="InterPro" id="IPR011598">
    <property type="entry name" value="bHLH_dom"/>
</dbReference>
<dbReference type="InterPro" id="IPR036638">
    <property type="entry name" value="HLH_DNA-bd_sf"/>
</dbReference>
<dbReference type="PANTHER" id="PTHR11969">
    <property type="entry name" value="MAX DIMERIZATION, MAD"/>
    <property type="match status" value="1"/>
</dbReference>
<dbReference type="PANTHER" id="PTHR11969:SF13">
    <property type="entry name" value="MAX-INTERACTING PROTEIN 1"/>
    <property type="match status" value="1"/>
</dbReference>
<dbReference type="Pfam" id="PF00010">
    <property type="entry name" value="HLH"/>
    <property type="match status" value="1"/>
</dbReference>
<dbReference type="SMART" id="SM00353">
    <property type="entry name" value="HLH"/>
    <property type="match status" value="1"/>
</dbReference>
<dbReference type="SUPFAM" id="SSF47459">
    <property type="entry name" value="HLH, helix-loop-helix DNA-binding domain"/>
    <property type="match status" value="1"/>
</dbReference>
<dbReference type="PROSITE" id="PS50888">
    <property type="entry name" value="BHLH"/>
    <property type="match status" value="1"/>
</dbReference>
<keyword id="KW-0238">DNA-binding</keyword>
<keyword id="KW-0539">Nucleus</keyword>
<keyword id="KW-1185">Reference proteome</keyword>
<keyword id="KW-0678">Repressor</keyword>
<keyword id="KW-0804">Transcription</keyword>
<keyword id="KW-0805">Transcription regulation</keyword>
<feature type="chain" id="PRO_0000127287" description="Max-interacting protein 1">
    <location>
        <begin position="1"/>
        <end position="228"/>
    </location>
</feature>
<feature type="domain" description="bHLH" evidence="2">
    <location>
        <begin position="67"/>
        <end position="119"/>
    </location>
</feature>
<feature type="region of interest" description="Disordered" evidence="3">
    <location>
        <begin position="29"/>
        <end position="76"/>
    </location>
</feature>
<feature type="region of interest" description="Disordered" evidence="3">
    <location>
        <begin position="162"/>
        <end position="228"/>
    </location>
</feature>
<feature type="compositionally biased region" description="Basic residues" evidence="3">
    <location>
        <begin position="43"/>
        <end position="56"/>
    </location>
</feature>
<feature type="compositionally biased region" description="Polar residues" evidence="3">
    <location>
        <begin position="57"/>
        <end position="70"/>
    </location>
</feature>
<feature type="compositionally biased region" description="Acidic residues" evidence="3">
    <location>
        <begin position="173"/>
        <end position="183"/>
    </location>
</feature>
<feature type="compositionally biased region" description="Polar residues" evidence="3">
    <location>
        <begin position="216"/>
        <end position="228"/>
    </location>
</feature>
<name>MXI1_RAT</name>